<proteinExistence type="evidence at transcript level"/>
<protein>
    <recommendedName>
        <fullName>SKP1-like protein 7</fullName>
        <shortName>AtSK7</shortName>
    </recommendedName>
</protein>
<gene>
    <name type="primary">ASK7</name>
    <name type="ordered locus">At3g21840</name>
    <name type="ORF">MSD21.21</name>
</gene>
<accession>Q9LSY0</accession>
<dbReference type="EMBL" id="AB025634">
    <property type="protein sequence ID" value="BAB02846.1"/>
    <property type="molecule type" value="Genomic_DNA"/>
</dbReference>
<dbReference type="EMBL" id="CP002686">
    <property type="protein sequence ID" value="AEE76557.1"/>
    <property type="molecule type" value="Genomic_DNA"/>
</dbReference>
<dbReference type="EMBL" id="BX841469">
    <property type="status" value="NOT_ANNOTATED_CDS"/>
    <property type="molecule type" value="mRNA"/>
</dbReference>
<dbReference type="RefSeq" id="NP_566693.1">
    <property type="nucleotide sequence ID" value="NM_113079.2"/>
</dbReference>
<dbReference type="SMR" id="Q9LSY0"/>
<dbReference type="BioGRID" id="7070">
    <property type="interactions" value="12"/>
</dbReference>
<dbReference type="ComplexPortal" id="CPX-1434">
    <property type="entry name" value="SCF(COI1) ubiquitin ligase complex, variant CUL1-RBX1A-ASK7"/>
</dbReference>
<dbReference type="ComplexPortal" id="CPX-1455">
    <property type="entry name" value="SCF(COI1) ubiquitin ligase complex, variant CUL1-RBX1B-ASK7"/>
</dbReference>
<dbReference type="ComplexPortal" id="CPX-1477">
    <property type="entry name" value="SCF(COI1) ubiquitin ligase complex, variant CUL2-RBX1A-ASK7"/>
</dbReference>
<dbReference type="ComplexPortal" id="CPX-1498">
    <property type="entry name" value="SCF(COI1) ubiquitin ligase complex, variant CUL2-RBX1B-ASK7"/>
</dbReference>
<dbReference type="ComplexPortal" id="CPX-1520">
    <property type="entry name" value="SCF(TIR1) ubiquitin ligase complex, variant CUL1-RBX1A-ASK7"/>
</dbReference>
<dbReference type="ComplexPortal" id="CPX-1541">
    <property type="entry name" value="SCF(TIR1) ubiquitin ligase complex, variant CUL1-RBX1B-ASK7"/>
</dbReference>
<dbReference type="ComplexPortal" id="CPX-1563">
    <property type="entry name" value="SCF(TIR1) ubiquitin ligase complex, variant CUL2-RBX1A-ASK7"/>
</dbReference>
<dbReference type="ComplexPortal" id="CPX-1584">
    <property type="entry name" value="SCF(TIR1) ubiquitin ligase complex, variant CUL2-RBX1B-ASK7"/>
</dbReference>
<dbReference type="FunCoup" id="Q9LSY0">
    <property type="interactions" value="6"/>
</dbReference>
<dbReference type="IntAct" id="Q9LSY0">
    <property type="interactions" value="1"/>
</dbReference>
<dbReference type="STRING" id="3702.Q9LSY0"/>
<dbReference type="PaxDb" id="3702-AT3G21840.1"/>
<dbReference type="ProteomicsDB" id="246511"/>
<dbReference type="EnsemblPlants" id="AT3G21840.1">
    <property type="protein sequence ID" value="AT3G21840.1"/>
    <property type="gene ID" value="AT3G21840"/>
</dbReference>
<dbReference type="GeneID" id="821738"/>
<dbReference type="Gramene" id="AT3G21840.1">
    <property type="protein sequence ID" value="AT3G21840.1"/>
    <property type="gene ID" value="AT3G21840"/>
</dbReference>
<dbReference type="KEGG" id="ath:AT3G21840"/>
<dbReference type="Araport" id="AT3G21840"/>
<dbReference type="TAIR" id="AT3G21840">
    <property type="gene designation" value="SK7"/>
</dbReference>
<dbReference type="eggNOG" id="KOG1724">
    <property type="taxonomic scope" value="Eukaryota"/>
</dbReference>
<dbReference type="HOGENOM" id="CLU_059252_5_0_1"/>
<dbReference type="InParanoid" id="Q9LSY0"/>
<dbReference type="OMA" id="ACYLNIE"/>
<dbReference type="OrthoDB" id="2342932at2759"/>
<dbReference type="PhylomeDB" id="Q9LSY0"/>
<dbReference type="UniPathway" id="UPA00143"/>
<dbReference type="PRO" id="PR:Q9LSY0"/>
<dbReference type="Proteomes" id="UP000006548">
    <property type="component" value="Chromosome 3"/>
</dbReference>
<dbReference type="ExpressionAtlas" id="Q9LSY0">
    <property type="expression patterns" value="baseline and differential"/>
</dbReference>
<dbReference type="GO" id="GO:0005634">
    <property type="term" value="C:nucleus"/>
    <property type="evidence" value="ECO:0007669"/>
    <property type="project" value="UniProtKB-SubCell"/>
</dbReference>
<dbReference type="GO" id="GO:0019005">
    <property type="term" value="C:SCF ubiquitin ligase complex"/>
    <property type="evidence" value="ECO:0000250"/>
    <property type="project" value="TAIR"/>
</dbReference>
<dbReference type="GO" id="GO:0009734">
    <property type="term" value="P:auxin-activated signaling pathway"/>
    <property type="evidence" value="ECO:0000303"/>
    <property type="project" value="ComplexPortal"/>
</dbReference>
<dbReference type="GO" id="GO:0009867">
    <property type="term" value="P:jasmonic acid mediated signaling pathway"/>
    <property type="evidence" value="ECO:0000315"/>
    <property type="project" value="ComplexPortal"/>
</dbReference>
<dbReference type="GO" id="GO:0016567">
    <property type="term" value="P:protein ubiquitination"/>
    <property type="evidence" value="ECO:0007669"/>
    <property type="project" value="UniProtKB-UniPathway"/>
</dbReference>
<dbReference type="GO" id="GO:0009733">
    <property type="term" value="P:response to auxin"/>
    <property type="evidence" value="ECO:0000303"/>
    <property type="project" value="ComplexPortal"/>
</dbReference>
<dbReference type="GO" id="GO:0009753">
    <property type="term" value="P:response to jasmonic acid"/>
    <property type="evidence" value="ECO:0000315"/>
    <property type="project" value="ComplexPortal"/>
</dbReference>
<dbReference type="GO" id="GO:0006511">
    <property type="term" value="P:ubiquitin-dependent protein catabolic process"/>
    <property type="evidence" value="ECO:0000304"/>
    <property type="project" value="TAIR"/>
</dbReference>
<dbReference type="CDD" id="cd18322">
    <property type="entry name" value="BTB_POZ_SKP1"/>
    <property type="match status" value="1"/>
</dbReference>
<dbReference type="FunFam" id="3.30.710.10:FF:000230">
    <property type="entry name" value="SKP1-like protein 7"/>
    <property type="match status" value="1"/>
</dbReference>
<dbReference type="Gene3D" id="3.30.710.10">
    <property type="entry name" value="Potassium Channel Kv1.1, Chain A"/>
    <property type="match status" value="1"/>
</dbReference>
<dbReference type="InterPro" id="IPR016897">
    <property type="entry name" value="SKP1"/>
</dbReference>
<dbReference type="InterPro" id="IPR001232">
    <property type="entry name" value="SKP1-like"/>
</dbReference>
<dbReference type="InterPro" id="IPR036296">
    <property type="entry name" value="SKP1-like_dim_sf"/>
</dbReference>
<dbReference type="InterPro" id="IPR011333">
    <property type="entry name" value="SKP1/BTB/POZ_sf"/>
</dbReference>
<dbReference type="InterPro" id="IPR016073">
    <property type="entry name" value="Skp1_comp_POZ"/>
</dbReference>
<dbReference type="PANTHER" id="PTHR11165">
    <property type="entry name" value="SKP1"/>
    <property type="match status" value="1"/>
</dbReference>
<dbReference type="Pfam" id="PF03931">
    <property type="entry name" value="Skp1_POZ"/>
    <property type="match status" value="1"/>
</dbReference>
<dbReference type="PIRSF" id="PIRSF028729">
    <property type="entry name" value="E3_ubiquit_lig_SCF_Skp"/>
    <property type="match status" value="1"/>
</dbReference>
<dbReference type="SMART" id="SM00512">
    <property type="entry name" value="Skp1"/>
    <property type="match status" value="1"/>
</dbReference>
<dbReference type="SUPFAM" id="SSF54695">
    <property type="entry name" value="POZ domain"/>
    <property type="match status" value="1"/>
</dbReference>
<dbReference type="SUPFAM" id="SSF81382">
    <property type="entry name" value="Skp1 dimerisation domain-like"/>
    <property type="match status" value="1"/>
</dbReference>
<evidence type="ECO:0000250" key="1"/>
<evidence type="ECO:0000269" key="2">
    <source>
    </source>
</evidence>
<evidence type="ECO:0000305" key="3"/>
<keyword id="KW-0539">Nucleus</keyword>
<keyword id="KW-1185">Reference proteome</keyword>
<keyword id="KW-0833">Ubl conjugation pathway</keyword>
<organism>
    <name type="scientific">Arabidopsis thaliana</name>
    <name type="common">Mouse-ear cress</name>
    <dbReference type="NCBI Taxonomy" id="3702"/>
    <lineage>
        <taxon>Eukaryota</taxon>
        <taxon>Viridiplantae</taxon>
        <taxon>Streptophyta</taxon>
        <taxon>Embryophyta</taxon>
        <taxon>Tracheophyta</taxon>
        <taxon>Spermatophyta</taxon>
        <taxon>Magnoliopsida</taxon>
        <taxon>eudicotyledons</taxon>
        <taxon>Gunneridae</taxon>
        <taxon>Pentapetalae</taxon>
        <taxon>rosids</taxon>
        <taxon>malvids</taxon>
        <taxon>Brassicales</taxon>
        <taxon>Brassicaceae</taxon>
        <taxon>Camelineae</taxon>
        <taxon>Arabidopsis</taxon>
    </lineage>
</organism>
<feature type="chain" id="PRO_0000375248" description="SKP1-like protein 7">
    <location>
        <begin position="1"/>
        <end position="125"/>
    </location>
</feature>
<feature type="region of interest" description="Interaction with the F-box domain of F-box proteins" evidence="1">
    <location>
        <begin position="94"/>
        <end position="125"/>
    </location>
</feature>
<feature type="sequence conflict" description="In Ref. 3; BX841469." evidence="3" ref="3">
    <original>I</original>
    <variation>N</variation>
    <location>
        <position position="51"/>
    </location>
</feature>
<feature type="sequence conflict" description="In Ref. 3; BX841469." evidence="3" ref="3">
    <original>D</original>
    <variation>E</variation>
    <location>
        <position position="119"/>
    </location>
</feature>
<feature type="sequence conflict" description="In Ref. 3; BX841469." evidence="3" ref="3">
    <original>W</original>
    <variation>R</variation>
    <location>
        <position position="122"/>
    </location>
</feature>
<name>ASK7_ARATH</name>
<comment type="function">
    <text evidence="1">Involved in ubiquitination and subsequent proteasomal degradation of target proteins. Together with CUL1, RBX1 and a F-box protein, it forms a SCF E3 ubiquitin ligase complex. The functional specificity of this complex depends on the type of F-box protein. In the SCF complex, it serves as an adapter that links the F-box protein to CUL1 (By similarity).</text>
</comment>
<comment type="pathway">
    <text>Protein modification; protein ubiquitination.</text>
</comment>
<comment type="subunit">
    <text evidence="1">Part of a SCF (SKP1-cullin-F-box) protein ligase complex.</text>
</comment>
<comment type="subcellular location">
    <subcellularLocation>
        <location evidence="1">Nucleus</location>
    </subcellularLocation>
</comment>
<comment type="tissue specificity">
    <text evidence="2">Restricted to siliques.</text>
</comment>
<comment type="similarity">
    <text evidence="3">Belongs to the SKP1 family.</text>
</comment>
<reference key="1">
    <citation type="journal article" date="2000" name="DNA Res.">
        <title>Structural analysis of Arabidopsis thaliana chromosome 3. I. Sequence features of the regions of 4,504,864 bp covered by sixty P1 and TAC clones.</title>
        <authorList>
            <person name="Sato S."/>
            <person name="Nakamura Y."/>
            <person name="Kaneko T."/>
            <person name="Katoh T."/>
            <person name="Asamizu E."/>
            <person name="Tabata S."/>
        </authorList>
    </citation>
    <scope>NUCLEOTIDE SEQUENCE [LARGE SCALE GENOMIC DNA]</scope>
    <source>
        <strain>cv. Columbia</strain>
    </source>
</reference>
<reference key="2">
    <citation type="journal article" date="2017" name="Plant J.">
        <title>Araport11: a complete reannotation of the Arabidopsis thaliana reference genome.</title>
        <authorList>
            <person name="Cheng C.Y."/>
            <person name="Krishnakumar V."/>
            <person name="Chan A.P."/>
            <person name="Thibaud-Nissen F."/>
            <person name="Schobel S."/>
            <person name="Town C.D."/>
        </authorList>
    </citation>
    <scope>GENOME REANNOTATION</scope>
    <source>
        <strain>cv. Columbia</strain>
    </source>
</reference>
<reference key="3">
    <citation type="journal article" date="2004" name="Genome Res.">
        <title>Whole genome sequence comparisons and 'full-length' cDNA sequences: a combined approach to evaluate and improve Arabidopsis genome annotation.</title>
        <authorList>
            <person name="Castelli V."/>
            <person name="Aury J.-M."/>
            <person name="Jaillon O."/>
            <person name="Wincker P."/>
            <person name="Clepet C."/>
            <person name="Menard M."/>
            <person name="Cruaud C."/>
            <person name="Quetier F."/>
            <person name="Scarpelli C."/>
            <person name="Schaechter V."/>
            <person name="Temple G."/>
            <person name="Caboche M."/>
            <person name="Weissenbach J."/>
            <person name="Salanoubat M."/>
        </authorList>
    </citation>
    <scope>NUCLEOTIDE SEQUENCE [LARGE SCALE MRNA]</scope>
    <source>
        <strain>cv. Columbia</strain>
    </source>
</reference>
<reference key="4">
    <citation type="journal article" date="2003" name="Plant Physiol.">
        <title>Members of the Arabidopsis-SKP1-like gene family exhibit a variety of expression patterns and may play diverse roles in Arabidopsis.</title>
        <authorList>
            <person name="Zhao D."/>
            <person name="Ni W."/>
            <person name="Feng B."/>
            <person name="Han T."/>
            <person name="Petrasek M.G."/>
            <person name="Ma H."/>
        </authorList>
    </citation>
    <scope>GENE FAMILY</scope>
    <scope>NOMENCLATURE</scope>
    <scope>TISSUE SPECIFICITY</scope>
</reference>
<sequence length="125" mass="14454">MSTKKIMLKSSDGKMFEIEEETARQCQTIAHMIEAECTDNVIPVSNVTSEILEMVIEYCNKHHVDAANPCSDEDLKKWDKEFMEKDQYTIFHLMNAAYDLHIKSLLALAYQTVADMVNDNKWAFE</sequence>